<organism>
    <name type="scientific">Mycobacterium tuberculosis (strain CDC 1551 / Oshkosh)</name>
    <dbReference type="NCBI Taxonomy" id="83331"/>
    <lineage>
        <taxon>Bacteria</taxon>
        <taxon>Bacillati</taxon>
        <taxon>Actinomycetota</taxon>
        <taxon>Actinomycetes</taxon>
        <taxon>Mycobacteriales</taxon>
        <taxon>Mycobacteriaceae</taxon>
        <taxon>Mycobacterium</taxon>
        <taxon>Mycobacterium tuberculosis complex</taxon>
    </lineage>
</organism>
<keyword id="KW-1185">Reference proteome</keyword>
<protein>
    <recommendedName>
        <fullName>Uncharacterized PPE family protein PPE12</fullName>
    </recommendedName>
</protein>
<evidence type="ECO:0000305" key="1"/>
<gene>
    <name type="primary">PPE12</name>
    <name type="ordered locus">MT0779</name>
</gene>
<comment type="similarity">
    <text evidence="1">Belongs to the mycobacterial PPE family.</text>
</comment>
<comment type="sequence caution" evidence="1">
    <conflict type="erroneous initiation">
        <sequence resource="EMBL-CDS" id="AAK45020"/>
    </conflict>
</comment>
<dbReference type="EMBL" id="AE000516">
    <property type="protein sequence ID" value="AAK45020.1"/>
    <property type="status" value="ALT_INIT"/>
    <property type="molecule type" value="Genomic_DNA"/>
</dbReference>
<dbReference type="PIR" id="F70825">
    <property type="entry name" value="F70825"/>
</dbReference>
<dbReference type="RefSeq" id="WP_003898574.1">
    <property type="nucleotide sequence ID" value="NZ_KK341227.1"/>
</dbReference>
<dbReference type="KEGG" id="mtc:MT0779"/>
<dbReference type="PATRIC" id="fig|83331.31.peg.837"/>
<dbReference type="HOGENOM" id="CLU_000243_4_3_11"/>
<dbReference type="Proteomes" id="UP000001020">
    <property type="component" value="Chromosome"/>
</dbReference>
<dbReference type="GO" id="GO:0052572">
    <property type="term" value="P:response to host immune response"/>
    <property type="evidence" value="ECO:0007669"/>
    <property type="project" value="TreeGrafter"/>
</dbReference>
<dbReference type="FunFam" id="1.20.1260.20:FF:000001">
    <property type="entry name" value="PPE family protein PPE41"/>
    <property type="match status" value="1"/>
</dbReference>
<dbReference type="Gene3D" id="1.20.1260.20">
    <property type="entry name" value="PPE superfamily"/>
    <property type="match status" value="1"/>
</dbReference>
<dbReference type="InterPro" id="IPR002989">
    <property type="entry name" value="Mycobac_pentapep"/>
</dbReference>
<dbReference type="InterPro" id="IPR000030">
    <property type="entry name" value="PPE_dom"/>
</dbReference>
<dbReference type="InterPro" id="IPR038332">
    <property type="entry name" value="PPE_sf"/>
</dbReference>
<dbReference type="PANTHER" id="PTHR46766">
    <property type="entry name" value="GLUTAMINE-RICH PROTEIN 2"/>
    <property type="match status" value="1"/>
</dbReference>
<dbReference type="PANTHER" id="PTHR46766:SF1">
    <property type="entry name" value="GLUTAMINE-RICH PROTEIN 2"/>
    <property type="match status" value="1"/>
</dbReference>
<dbReference type="Pfam" id="PF01469">
    <property type="entry name" value="Pentapeptide_2"/>
    <property type="match status" value="5"/>
</dbReference>
<dbReference type="Pfam" id="PF00823">
    <property type="entry name" value="PPE"/>
    <property type="match status" value="1"/>
</dbReference>
<dbReference type="SUPFAM" id="SSF140459">
    <property type="entry name" value="PE/PPE dimer-like"/>
    <property type="match status" value="1"/>
</dbReference>
<reference key="1">
    <citation type="journal article" date="2002" name="J. Bacteriol.">
        <title>Whole-genome comparison of Mycobacterium tuberculosis clinical and laboratory strains.</title>
        <authorList>
            <person name="Fleischmann R.D."/>
            <person name="Alland D."/>
            <person name="Eisen J.A."/>
            <person name="Carpenter L."/>
            <person name="White O."/>
            <person name="Peterson J.D."/>
            <person name="DeBoy R.T."/>
            <person name="Dodson R.J."/>
            <person name="Gwinn M.L."/>
            <person name="Haft D.H."/>
            <person name="Hickey E.K."/>
            <person name="Kolonay J.F."/>
            <person name="Nelson W.C."/>
            <person name="Umayam L.A."/>
            <person name="Ermolaeva M.D."/>
            <person name="Salzberg S.L."/>
            <person name="Delcher A."/>
            <person name="Utterback T.R."/>
            <person name="Weidman J.F."/>
            <person name="Khouri H.M."/>
            <person name="Gill J."/>
            <person name="Mikula A."/>
            <person name="Bishai W."/>
            <person name="Jacobs W.R. Jr."/>
            <person name="Venter J.C."/>
            <person name="Fraser C.M."/>
        </authorList>
    </citation>
    <scope>NUCLEOTIDE SEQUENCE [LARGE SCALE GENOMIC DNA]</scope>
    <source>
        <strain>CDC 1551 / Oshkosh</strain>
    </source>
</reference>
<accession>P9WI36</accession>
<accession>L0T4T0</accession>
<accession>Q79FW4</accession>
<accession>Q7D9B9</accession>
<feature type="chain" id="PRO_0000428075" description="Uncharacterized PPE family protein PPE12">
    <location>
        <begin position="1"/>
        <end position="645"/>
    </location>
</feature>
<sequence length="645" mass="62693">MVGFAWLPPETNSLRMYLGAGSRPLLAAAGAWDGLAEELHAAASSFGSVTSELAGGAWQGPASAAMANAAGPYASWLTAAGAQAELAARQARAAAGAFEEALAGVVHPAVVQANRVRTWLLAVSNVFGQNAPAIAAMESTYEQMWAQDVAVMAGYHAASSAAAAQLASWQPALPNINLGVGNIGNLNVGNGNTGDYNLGNGNLGNANFGGGNGSAFHGQISSFNVGSGNIGNFNLGSGNGNVGIGPSSFNVGSGNIGNANVGGGNSGDNNFGFGNFGNANIGIGNAGPNMSSPAVPTPGNGNVGIGNGGNGNFGGGNTGNANIGLGNVGDGNVGFGNSGSYNFGFGNTGNNNIGIGLTGSNQIGFGGLNSGSGNIGFGNSGTGNIGFFNSGSGNFGVGNSGVTNTGVANSGNINTGFGNSGFINTGFGNALSVNTGFGNSGQANTGIGNAGDFNTGNFNGGIINTGSFNSGAFNSGSFNGGDANSGFLNSGLTNTGFANSGNINTGGFNAGNLNTGFGNTTDGLGENSGFGNAGSGNSGFNNSGRGNSGAQNVGNLQISGFANSGQSVTGYNNSVSVTSGFGNKGTGLFSGFMSGFGNTGFLQSGFGNLEANPDNNSATSGFGNSGKQDSGGFNSIDFVSGFFHR</sequence>
<proteinExistence type="inferred from homology"/>
<name>PPE12_MYCTO</name>